<reference key="1">
    <citation type="journal article" date="1993" name="J. Bacteriol.">
        <title>Molecular cloning, sequencing, and transcriptional analysis of the groESL operon from Bacillus stearothermophilus.</title>
        <authorList>
            <person name="Schoen U."/>
            <person name="Schumann W."/>
        </authorList>
    </citation>
    <scope>NUCLEOTIDE SEQUENCE [GENOMIC DNA]</scope>
    <source>
        <strain>NUB36</strain>
    </source>
</reference>
<proteinExistence type="evidence at transcript level"/>
<keyword id="KW-0143">Chaperone</keyword>
<keyword id="KW-0963">Cytoplasm</keyword>
<keyword id="KW-0346">Stress response</keyword>
<organism>
    <name type="scientific">Geobacillus stearothermophilus</name>
    <name type="common">Bacillus stearothermophilus</name>
    <dbReference type="NCBI Taxonomy" id="1422"/>
    <lineage>
        <taxon>Bacteria</taxon>
        <taxon>Bacillati</taxon>
        <taxon>Bacillota</taxon>
        <taxon>Bacilli</taxon>
        <taxon>Bacillales</taxon>
        <taxon>Anoxybacillaceae</taxon>
        <taxon>Geobacillus</taxon>
    </lineage>
</organism>
<dbReference type="EMBL" id="L10132">
    <property type="protein sequence ID" value="AAA22751.2"/>
    <property type="molecule type" value="Genomic_DNA"/>
</dbReference>
<dbReference type="PIR" id="A49855">
    <property type="entry name" value="A49855"/>
</dbReference>
<dbReference type="SMR" id="Q07200"/>
<dbReference type="GO" id="GO:0005737">
    <property type="term" value="C:cytoplasm"/>
    <property type="evidence" value="ECO:0007669"/>
    <property type="project" value="UniProtKB-SubCell"/>
</dbReference>
<dbReference type="GO" id="GO:0005524">
    <property type="term" value="F:ATP binding"/>
    <property type="evidence" value="ECO:0007669"/>
    <property type="project" value="InterPro"/>
</dbReference>
<dbReference type="GO" id="GO:0046872">
    <property type="term" value="F:metal ion binding"/>
    <property type="evidence" value="ECO:0007669"/>
    <property type="project" value="TreeGrafter"/>
</dbReference>
<dbReference type="GO" id="GO:0044183">
    <property type="term" value="F:protein folding chaperone"/>
    <property type="evidence" value="ECO:0007669"/>
    <property type="project" value="InterPro"/>
</dbReference>
<dbReference type="GO" id="GO:0051087">
    <property type="term" value="F:protein-folding chaperone binding"/>
    <property type="evidence" value="ECO:0007669"/>
    <property type="project" value="TreeGrafter"/>
</dbReference>
<dbReference type="GO" id="GO:0051082">
    <property type="term" value="F:unfolded protein binding"/>
    <property type="evidence" value="ECO:0007669"/>
    <property type="project" value="TreeGrafter"/>
</dbReference>
<dbReference type="GO" id="GO:0051085">
    <property type="term" value="P:chaperone cofactor-dependent protein refolding"/>
    <property type="evidence" value="ECO:0007669"/>
    <property type="project" value="TreeGrafter"/>
</dbReference>
<dbReference type="CDD" id="cd00320">
    <property type="entry name" value="cpn10"/>
    <property type="match status" value="1"/>
</dbReference>
<dbReference type="FunFam" id="2.30.33.40:FF:000001">
    <property type="entry name" value="10 kDa chaperonin"/>
    <property type="match status" value="1"/>
</dbReference>
<dbReference type="Gene3D" id="2.30.33.40">
    <property type="entry name" value="GroES chaperonin"/>
    <property type="match status" value="1"/>
</dbReference>
<dbReference type="HAMAP" id="MF_00580">
    <property type="entry name" value="CH10"/>
    <property type="match status" value="1"/>
</dbReference>
<dbReference type="InterPro" id="IPR020818">
    <property type="entry name" value="Chaperonin_GroES"/>
</dbReference>
<dbReference type="InterPro" id="IPR037124">
    <property type="entry name" value="Chaperonin_GroES_sf"/>
</dbReference>
<dbReference type="InterPro" id="IPR018369">
    <property type="entry name" value="Chaprnonin_Cpn10_CS"/>
</dbReference>
<dbReference type="InterPro" id="IPR011032">
    <property type="entry name" value="GroES-like_sf"/>
</dbReference>
<dbReference type="NCBIfam" id="NF001527">
    <property type="entry name" value="PRK00364.1-2"/>
    <property type="match status" value="1"/>
</dbReference>
<dbReference type="NCBIfam" id="NF001530">
    <property type="entry name" value="PRK00364.1-6"/>
    <property type="match status" value="1"/>
</dbReference>
<dbReference type="NCBIfam" id="NF001531">
    <property type="entry name" value="PRK00364.2-2"/>
    <property type="match status" value="1"/>
</dbReference>
<dbReference type="NCBIfam" id="NF001532">
    <property type="entry name" value="PRK00364.2-3"/>
    <property type="match status" value="1"/>
</dbReference>
<dbReference type="NCBIfam" id="NF001533">
    <property type="entry name" value="PRK00364.2-4"/>
    <property type="match status" value="1"/>
</dbReference>
<dbReference type="NCBIfam" id="NF001534">
    <property type="entry name" value="PRK00364.2-5"/>
    <property type="match status" value="1"/>
</dbReference>
<dbReference type="PANTHER" id="PTHR10772">
    <property type="entry name" value="10 KDA HEAT SHOCK PROTEIN"/>
    <property type="match status" value="1"/>
</dbReference>
<dbReference type="PANTHER" id="PTHR10772:SF58">
    <property type="entry name" value="CO-CHAPERONIN GROES"/>
    <property type="match status" value="1"/>
</dbReference>
<dbReference type="Pfam" id="PF00166">
    <property type="entry name" value="Cpn10"/>
    <property type="match status" value="1"/>
</dbReference>
<dbReference type="PRINTS" id="PR00297">
    <property type="entry name" value="CHAPERONIN10"/>
</dbReference>
<dbReference type="SMART" id="SM00883">
    <property type="entry name" value="Cpn10"/>
    <property type="match status" value="1"/>
</dbReference>
<dbReference type="SUPFAM" id="SSF50129">
    <property type="entry name" value="GroES-like"/>
    <property type="match status" value="1"/>
</dbReference>
<dbReference type="PROSITE" id="PS00681">
    <property type="entry name" value="CHAPERONINS_CPN10"/>
    <property type="match status" value="1"/>
</dbReference>
<comment type="function">
    <text evidence="1">Together with the chaperonin GroEL, plays an essential role in assisting protein folding. The GroEL-GroES system forms a nano-cage that allows encapsulation of the non-native substrate proteins and provides a physical environment optimized to promote and accelerate protein folding. GroES binds to the apical surface of the GroEL ring, thereby capping the opening of the GroEL channel.</text>
</comment>
<comment type="subunit">
    <text evidence="1">Heptamer of 7 subunits arranged in a ring. Interacts with the chaperonin GroEL.</text>
</comment>
<comment type="subcellular location">
    <subcellularLocation>
        <location evidence="1">Cytoplasm</location>
    </subcellularLocation>
</comment>
<comment type="induction">
    <text>By heat shock.</text>
</comment>
<comment type="similarity">
    <text evidence="1 2">Belongs to the GroES chaperonin family.</text>
</comment>
<feature type="chain" id="PRO_0000174697" description="Co-chaperonin GroES">
    <location>
        <begin position="1"/>
        <end position="94"/>
    </location>
</feature>
<accession>Q07200</accession>
<protein>
    <recommendedName>
        <fullName evidence="1">Co-chaperonin GroES</fullName>
    </recommendedName>
    <alternativeName>
        <fullName evidence="1">10 kDa chaperonin</fullName>
    </alternativeName>
    <alternativeName>
        <fullName evidence="1">Chaperonin-10</fullName>
        <shortName evidence="1">Cpn10</shortName>
    </alternativeName>
</protein>
<gene>
    <name evidence="1" type="primary">groES</name>
    <name evidence="1" type="synonym">groS</name>
</gene>
<name>CH10_GEOSE</name>
<sequence length="94" mass="10241">MLKPLGDRVVIEVIETEEKTASGIVLPDTAKEKPQEGRVVAVGKGRVLDSGERVAPEVEVGDRIIFSKYAGTEVKYDGKEYLILRESDILAVIG</sequence>
<evidence type="ECO:0000255" key="1">
    <source>
        <dbReference type="HAMAP-Rule" id="MF_00580"/>
    </source>
</evidence>
<evidence type="ECO:0000305" key="2"/>